<evidence type="ECO:0000250" key="1">
    <source>
        <dbReference type="UniProtKB" id="Q05017"/>
    </source>
</evidence>
<evidence type="ECO:0000255" key="2"/>
<evidence type="ECO:0000255" key="3">
    <source>
        <dbReference type="PROSITE-ProRule" id="PRU00498"/>
    </source>
</evidence>
<evidence type="ECO:0000256" key="4">
    <source>
        <dbReference type="SAM" id="MobiDB-lite"/>
    </source>
</evidence>
<evidence type="ECO:0000269" key="5">
    <source>
    </source>
</evidence>
<evidence type="ECO:0000269" key="6">
    <source>
    </source>
</evidence>
<evidence type="ECO:0000269" key="7">
    <source>
    </source>
</evidence>
<evidence type="ECO:0000269" key="8">
    <source>
    </source>
</evidence>
<evidence type="ECO:0000305" key="9"/>
<evidence type="ECO:0000305" key="10">
    <source>
    </source>
</evidence>
<evidence type="ECO:0000305" key="11">
    <source>
    </source>
</evidence>
<evidence type="ECO:0000305" key="12">
    <source>
    </source>
</evidence>
<gene>
    <name type="primary">Plb1</name>
    <name type="synonym">Phlpb</name>
</gene>
<accession>O54728</accession>
<reference key="1">
    <citation type="journal article" date="1998" name="J. Biol. Chem.">
        <title>Identification of functional domains of rat intestinal phospholipase B/lipase. Its cDNA cloning, expression, and tissue distribution.</title>
        <authorList>
            <person name="Takemori H."/>
            <person name="Zolotaryov F.N."/>
            <person name="Ting L."/>
            <person name="Urbain T."/>
            <person name="Komatsubara T."/>
            <person name="Hatano O."/>
            <person name="Okamoto M."/>
            <person name="Tojo H."/>
        </authorList>
    </citation>
    <scope>NUCLEOTIDE SEQUENCE [MRNA]</scope>
    <scope>FUNCTION</scope>
    <scope>CATALYTIC ACTIVITY</scope>
    <scope>ACTIVITY REGULATION</scope>
    <scope>PROTEOLYTIC PROCESSING</scope>
    <scope>DOMAIN</scope>
    <scope>SUBCELLULAR LOCATION</scope>
    <scope>TISSUE SPECIFICITY</scope>
    <source>
        <strain>Sprague-Dawley</strain>
        <tissue>Ileal mucosa</tissue>
    </source>
</reference>
<reference key="2">
    <citation type="journal article" date="1998" name="J. Biol. Chem.">
        <title>Purification and characterization of a catalytic domain of rat intestinal phospholipase B/lipase associated with brush border membranes.</title>
        <authorList>
            <person name="Tojo H."/>
            <person name="Ichida T."/>
            <person name="Okamoto M."/>
        </authorList>
    </citation>
    <scope>PROTEIN SEQUENCE OF 368-380 AND 529-559</scope>
    <scope>FUNCTION</scope>
    <scope>CATALYTIC ACTIVITY</scope>
    <scope>ACTIVITY REGULATION</scope>
    <scope>BIOPHYSICOCHEMICAL PROPERTIES</scope>
    <scope>SUBCELLULAR LOCATION</scope>
</reference>
<reference key="3">
    <citation type="journal article" date="1991" name="Biochem. Cell Biol.">
        <title>Further characterization of a novel phospholipase B (phospholipase A2-lysophospholipase) from intestinal brush-border membranes.</title>
        <authorList>
            <person name="Pind S."/>
            <person name="Kuksis A."/>
        </authorList>
    </citation>
    <scope>TISSUE SPECIFICITY</scope>
</reference>
<reference key="4">
    <citation type="journal article" date="2001" name="Biochemistry">
        <title>Identification of essential residues for catalysis of rat intestinal phospholipase B/lipase.</title>
        <authorList>
            <person name="Lu T."/>
            <person name="Ito M."/>
            <person name="Tchoua U."/>
            <person name="Takemori H."/>
            <person name="Okamoto M."/>
            <person name="Tojo H."/>
        </authorList>
    </citation>
    <scope>FUNCTION</scope>
    <scope>CATALYTIC ACTIVITY</scope>
    <scope>ACTIVE SITE</scope>
    <scope>MUTAGENESIS OF SER-404; SER-414; SER-429; SER-459; ASP-518; HIS-659; HIS-665 AND HIS-686</scope>
</reference>
<feature type="signal peptide" evidence="2">
    <location>
        <begin position="1"/>
        <end position="27"/>
    </location>
</feature>
<feature type="chain" id="PRO_0000324386" description="Phospholipase B1, membrane-associated">
    <location>
        <begin position="28"/>
        <end position="1450"/>
    </location>
</feature>
<feature type="topological domain" description="Extracellular" evidence="2">
    <location>
        <begin position="28"/>
        <end position="1422"/>
    </location>
</feature>
<feature type="transmembrane region" description="Helical" evidence="2">
    <location>
        <begin position="1423"/>
        <end position="1443"/>
    </location>
</feature>
<feature type="topological domain" description="Cytoplasmic" evidence="2">
    <location>
        <begin position="1444"/>
        <end position="1450"/>
    </location>
</feature>
<feature type="repeat" description="1" evidence="2">
    <location>
        <begin position="41"/>
        <end position="351"/>
    </location>
</feature>
<feature type="repeat" description="2" evidence="2">
    <location>
        <begin position="366"/>
        <end position="711"/>
    </location>
</feature>
<feature type="repeat" description="3" evidence="2">
    <location>
        <begin position="712"/>
        <end position="1058"/>
    </location>
</feature>
<feature type="repeat" description="4" evidence="2">
    <location>
        <begin position="1068"/>
        <end position="1407"/>
    </location>
</feature>
<feature type="region of interest" description="4 X 308-326 AA approximate repeats" evidence="2">
    <location>
        <begin position="41"/>
        <end position="1407"/>
    </location>
</feature>
<feature type="region of interest" description="Disordered" evidence="4">
    <location>
        <begin position="708"/>
        <end position="734"/>
    </location>
</feature>
<feature type="region of interest" description="Necessary for membrane localization" evidence="8">
    <location>
        <begin position="1408"/>
        <end position="1450"/>
    </location>
</feature>
<feature type="compositionally biased region" description="Polar residues" evidence="4">
    <location>
        <begin position="708"/>
        <end position="720"/>
    </location>
</feature>
<feature type="active site" evidence="10">
    <location>
        <position position="404"/>
    </location>
</feature>
<feature type="active site" evidence="10">
    <location>
        <position position="518"/>
    </location>
</feature>
<feature type="active site" evidence="10">
    <location>
        <position position="659"/>
    </location>
</feature>
<feature type="glycosylation site" description="N-linked (GlcNAc...) asparagine" evidence="3">
    <location>
        <position position="32"/>
    </location>
</feature>
<feature type="glycosylation site" description="N-linked (GlcNAc...) asparagine" evidence="3">
    <location>
        <position position="45"/>
    </location>
</feature>
<feature type="glycosylation site" description="N-linked (GlcNAc...) asparagine" evidence="3">
    <location>
        <position position="179"/>
    </location>
</feature>
<feature type="glycosylation site" description="N-linked (GlcNAc...) asparagine" evidence="3">
    <location>
        <position position="699"/>
    </location>
</feature>
<feature type="glycosylation site" description="N-linked (GlcNAc...) asparagine" evidence="3">
    <location>
        <position position="787"/>
    </location>
</feature>
<feature type="glycosylation site" description="N-linked (GlcNAc...) asparagine" evidence="3">
    <location>
        <position position="801"/>
    </location>
</feature>
<feature type="glycosylation site" description="N-linked (GlcNAc...) asparagine" evidence="3">
    <location>
        <position position="844"/>
    </location>
</feature>
<feature type="glycosylation site" description="N-linked (GlcNAc...) asparagine" evidence="3">
    <location>
        <position position="880"/>
    </location>
</feature>
<feature type="glycosylation site" description="N-linked (GlcNAc...) asparagine" evidence="3">
    <location>
        <position position="926"/>
    </location>
</feature>
<feature type="glycosylation site" description="N-linked (GlcNAc...) asparagine" evidence="3">
    <location>
        <position position="1059"/>
    </location>
</feature>
<feature type="glycosylation site" description="N-linked (GlcNAc...) asparagine" evidence="3">
    <location>
        <position position="1226"/>
    </location>
</feature>
<feature type="glycosylation site" description="N-linked (GlcNAc...) asparagine" evidence="3">
    <location>
        <position position="1280"/>
    </location>
</feature>
<feature type="glycosylation site" description="N-linked (GlcNAc...) asparagine" evidence="3">
    <location>
        <position position="1383"/>
    </location>
</feature>
<feature type="glycosylation site" description="N-linked (GlcNAc...) asparagine" evidence="3">
    <location>
        <position position="1387"/>
    </location>
</feature>
<feature type="mutagenesis site" description="Loss of PLA2, lysophospholipase and lipase activities." evidence="5">
    <original>S</original>
    <variation>A</variation>
    <variation>C</variation>
    <location>
        <position position="404"/>
    </location>
</feature>
<feature type="mutagenesis site" description="No effect on lysophospholipase to PLA2 activity ratio." evidence="5">
    <original>S</original>
    <variation>A</variation>
    <location>
        <position position="414"/>
    </location>
</feature>
<feature type="mutagenesis site" description="No effect on activity." evidence="5">
    <original>S</original>
    <variation>A</variation>
    <location>
        <position position="429"/>
    </location>
</feature>
<feature type="mutagenesis site" description="Decrease in PLA2, lysophospholipase and lipase activities." evidence="5">
    <original>S</original>
    <variation>A</variation>
    <location>
        <position position="459"/>
    </location>
</feature>
<feature type="mutagenesis site" description="Loss of PLA2, lysophospholipase and lipase activities." evidence="5">
    <original>D</original>
    <variation>A</variation>
    <variation>V</variation>
    <location>
        <position position="518"/>
    </location>
</feature>
<feature type="mutagenesis site" description="Impairs PLA2, lysophospholipase and lipase activities." evidence="5">
    <original>D</original>
    <variation>E</variation>
    <variation>N</variation>
    <location>
        <position position="518"/>
    </location>
</feature>
<feature type="mutagenesis site" description="Loss of PLA2, lysophospholipase and lipase activities." evidence="5">
    <original>H</original>
    <variation>A</variation>
    <location>
        <position position="659"/>
    </location>
</feature>
<feature type="mutagenesis site" description="Impairs PLA2, lysophospholipase and lipase activities." evidence="5">
    <original>H</original>
    <variation>A</variation>
    <location>
        <position position="665"/>
    </location>
</feature>
<feature type="mutagenesis site" description="No effect on activity." evidence="5">
    <original>H</original>
    <variation>A</variation>
    <location>
        <position position="686"/>
    </location>
</feature>
<protein>
    <recommendedName>
        <fullName>Phospholipase B1, membrane-associated</fullName>
        <shortName>Phospholipase B</shortName>
    </recommendedName>
    <alternativeName>
        <fullName>Lysophospholipase</fullName>
        <ecNumber evidence="5 7 8">3.1.1.5</ecNumber>
    </alternativeName>
    <alternativeName>
        <fullName>Phospholipase A2</fullName>
        <ecNumber evidence="5 7 8">3.1.1.4</ecNumber>
    </alternativeName>
    <alternativeName>
        <fullName>Phospholipase B/lipase</fullName>
        <shortName>PLB/LIP</shortName>
    </alternativeName>
    <alternativeName>
        <fullName>Triacylglycerol lipase</fullName>
        <ecNumber evidence="5 7 8">3.1.1.3</ecNumber>
    </alternativeName>
</protein>
<comment type="function">
    <text evidence="1 5 7 8 11">Calcium-independent membrane-associated phospholipase that catalyzes complete diacylation of phospholipids by hydrolyzing both sn-1 and sn-2 fatty acyl chains attached to the glycerol backbone (phospholipase B activity) (By similarity). Has dual phospholipase and lysophospholipase activities toward diacylphospholipids (PubMed:11401559, PubMed:9442064, PubMed:9442065). Preferentially cleaves sn-2 ester bonds over sn-1 bonds (PubMed:9442064). Acts as a lipase toward glycerolipid substrates (PubMed:11401559, PubMed:9442064, PubMed:9442065). Hydrolyzes fatty acyl chains of diacylglycerols with preference for the sn-2 position and of triacylglycerols with not positional selectivity (PubMed:11401559, PubMed:9442064, PubMed:9442065). May also hydrolyze long chain retinyl esters such as retinyl palmitate (By similarity). May contribute to digestion of dietary phospholipids, glycerolipids and retinoids, facilitating lipid absorption at the brush border (Probable).</text>
</comment>
<comment type="catalytic activity">
    <reaction evidence="5 7 8">
        <text>a 1,2-diacyl-sn-glycero-3-phosphocholine + H2O = a 1-acyl-sn-glycero-3-phosphocholine + a fatty acid + H(+)</text>
        <dbReference type="Rhea" id="RHEA:15801"/>
        <dbReference type="ChEBI" id="CHEBI:15377"/>
        <dbReference type="ChEBI" id="CHEBI:15378"/>
        <dbReference type="ChEBI" id="CHEBI:28868"/>
        <dbReference type="ChEBI" id="CHEBI:57643"/>
        <dbReference type="ChEBI" id="CHEBI:58168"/>
        <dbReference type="EC" id="3.1.1.4"/>
    </reaction>
    <physiologicalReaction direction="left-to-right" evidence="10 11 12">
        <dbReference type="Rhea" id="RHEA:15802"/>
    </physiologicalReaction>
</comment>
<comment type="catalytic activity">
    <reaction evidence="7">
        <text>a 1-O-alkyl-2-acyl-sn-glycero-3-phosphocholine + H2O = a 1-O-alkyl-sn-glycero-3-phosphocholine + a fatty acid + H(+)</text>
        <dbReference type="Rhea" id="RHEA:36231"/>
        <dbReference type="ChEBI" id="CHEBI:15377"/>
        <dbReference type="ChEBI" id="CHEBI:15378"/>
        <dbReference type="ChEBI" id="CHEBI:28868"/>
        <dbReference type="ChEBI" id="CHEBI:30909"/>
        <dbReference type="ChEBI" id="CHEBI:36702"/>
        <dbReference type="EC" id="3.1.1.4"/>
    </reaction>
    <physiologicalReaction direction="left-to-right" evidence="11">
        <dbReference type="Rhea" id="RHEA:36232"/>
    </physiologicalReaction>
</comment>
<comment type="catalytic activity">
    <reaction evidence="5 7 8">
        <text>a 1-acyl-sn-glycero-3-phosphocholine + H2O = sn-glycerol 3-phosphocholine + a fatty acid + H(+)</text>
        <dbReference type="Rhea" id="RHEA:15177"/>
        <dbReference type="ChEBI" id="CHEBI:15377"/>
        <dbReference type="ChEBI" id="CHEBI:15378"/>
        <dbReference type="ChEBI" id="CHEBI:16870"/>
        <dbReference type="ChEBI" id="CHEBI:28868"/>
        <dbReference type="ChEBI" id="CHEBI:58168"/>
        <dbReference type="EC" id="3.1.1.5"/>
    </reaction>
    <physiologicalReaction direction="left-to-right" evidence="10 11 12">
        <dbReference type="Rhea" id="RHEA:15178"/>
    </physiologicalReaction>
</comment>
<comment type="catalytic activity">
    <reaction evidence="5 7 8">
        <text>a triacylglycerol + H2O = a diacylglycerol + a fatty acid + H(+)</text>
        <dbReference type="Rhea" id="RHEA:12044"/>
        <dbReference type="ChEBI" id="CHEBI:15377"/>
        <dbReference type="ChEBI" id="CHEBI:15378"/>
        <dbReference type="ChEBI" id="CHEBI:17855"/>
        <dbReference type="ChEBI" id="CHEBI:18035"/>
        <dbReference type="ChEBI" id="CHEBI:28868"/>
        <dbReference type="EC" id="3.1.1.3"/>
    </reaction>
    <physiologicalReaction direction="left-to-right" evidence="10 11 12">
        <dbReference type="Rhea" id="RHEA:12045"/>
    </physiologicalReaction>
</comment>
<comment type="catalytic activity">
    <reaction evidence="7">
        <text>1,2-dihexadecanoyl-sn-glycero-3-phosphocholine + H2O = 1-hexadecanoyl-sn-glycero-3-phosphocholine + hexadecanoate + H(+)</text>
        <dbReference type="Rhea" id="RHEA:41223"/>
        <dbReference type="ChEBI" id="CHEBI:7896"/>
        <dbReference type="ChEBI" id="CHEBI:15377"/>
        <dbReference type="ChEBI" id="CHEBI:15378"/>
        <dbReference type="ChEBI" id="CHEBI:72998"/>
        <dbReference type="ChEBI" id="CHEBI:72999"/>
    </reaction>
    <physiologicalReaction direction="left-to-right" evidence="11">
        <dbReference type="Rhea" id="RHEA:41224"/>
    </physiologicalReaction>
</comment>
<comment type="catalytic activity">
    <reaction evidence="5 7 8">
        <text>1-hexadecanoyl-2-(9Z-octadecenoyl)-sn-glycero-3-phosphocholine + H2O = 1-hexadecanoyl-sn-glycero-3-phosphocholine + (9Z)-octadecenoate + H(+)</text>
        <dbReference type="Rhea" id="RHEA:38779"/>
        <dbReference type="ChEBI" id="CHEBI:15377"/>
        <dbReference type="ChEBI" id="CHEBI:15378"/>
        <dbReference type="ChEBI" id="CHEBI:30823"/>
        <dbReference type="ChEBI" id="CHEBI:72998"/>
        <dbReference type="ChEBI" id="CHEBI:73001"/>
    </reaction>
    <physiologicalReaction direction="left-to-right" evidence="10 11 12">
        <dbReference type="Rhea" id="RHEA:38780"/>
    </physiologicalReaction>
</comment>
<comment type="catalytic activity">
    <reaction evidence="7">
        <text>1,2-di-(9Z-octadecenoyl)-sn-glycero-3-phosphocholine + H2O = 1-(9Z-octadecenoyl)-sn-glycero-3-phosphocholine + (9Z)-octadecenoate + H(+)</text>
        <dbReference type="Rhea" id="RHEA:40923"/>
        <dbReference type="ChEBI" id="CHEBI:15377"/>
        <dbReference type="ChEBI" id="CHEBI:15378"/>
        <dbReference type="ChEBI" id="CHEBI:28610"/>
        <dbReference type="ChEBI" id="CHEBI:30823"/>
        <dbReference type="ChEBI" id="CHEBI:74669"/>
    </reaction>
    <physiologicalReaction direction="left-to-right" evidence="11">
        <dbReference type="Rhea" id="RHEA:40924"/>
    </physiologicalReaction>
</comment>
<comment type="catalytic activity">
    <reaction evidence="1">
        <text>1-hexadecanoyl-2-(9Z,12Z-octadecadienoyl)-sn-glycero-3-phosphocholine + H2O = (9Z,12Z)-octadecadienoate + 1-hexadecanoyl-sn-glycero-3-phosphocholine + H(+)</text>
        <dbReference type="Rhea" id="RHEA:40811"/>
        <dbReference type="ChEBI" id="CHEBI:15377"/>
        <dbReference type="ChEBI" id="CHEBI:15378"/>
        <dbReference type="ChEBI" id="CHEBI:30245"/>
        <dbReference type="ChEBI" id="CHEBI:72998"/>
        <dbReference type="ChEBI" id="CHEBI:73002"/>
    </reaction>
    <physiologicalReaction direction="left-to-right" evidence="1">
        <dbReference type="Rhea" id="RHEA:40812"/>
    </physiologicalReaction>
</comment>
<comment type="catalytic activity">
    <reaction evidence="1">
        <text>1-hexadecanoyl-2-(9Z,12Z-octadecadienoyl)-sn-glycero-3-phosphocholine + H2O = 2-(9Z,12Z-octadecadienoyl)-sn-glycero-3-phosphocholine + hexadecanoate + H(+)</text>
        <dbReference type="Rhea" id="RHEA:40971"/>
        <dbReference type="ChEBI" id="CHEBI:7896"/>
        <dbReference type="ChEBI" id="CHEBI:15377"/>
        <dbReference type="ChEBI" id="CHEBI:15378"/>
        <dbReference type="ChEBI" id="CHEBI:73002"/>
        <dbReference type="ChEBI" id="CHEBI:76084"/>
    </reaction>
    <physiologicalReaction direction="left-to-right" evidence="1">
        <dbReference type="Rhea" id="RHEA:40972"/>
    </physiologicalReaction>
</comment>
<comment type="catalytic activity">
    <reaction evidence="7">
        <text>1-hexadecanoyl-2-(9Z-octadecenoyl)-sn-glycero-3-phosphoethanolamine + H2O = 1-hexadecanoyl-sn-glycero-3-phosphoethanolamine + (9Z)-octadecenoate + H(+)</text>
        <dbReference type="Rhea" id="RHEA:40911"/>
        <dbReference type="ChEBI" id="CHEBI:15377"/>
        <dbReference type="ChEBI" id="CHEBI:15378"/>
        <dbReference type="ChEBI" id="CHEBI:30823"/>
        <dbReference type="ChEBI" id="CHEBI:73004"/>
        <dbReference type="ChEBI" id="CHEBI:73007"/>
    </reaction>
    <physiologicalReaction direction="left-to-right" evidence="11">
        <dbReference type="Rhea" id="RHEA:40912"/>
    </physiologicalReaction>
</comment>
<comment type="catalytic activity">
    <reaction evidence="7">
        <text>1-hexadecanoyl-2-(9Z-octadecenoyl)-sn-glycero-3-phospho-(1'-sn-glycerol) + H2O = 1-hexadecanoyl-sn-glycero-3-phospho-(1'-sn-glycerol) + (9Z)-octadecenoate + H(+)</text>
        <dbReference type="Rhea" id="RHEA:40919"/>
        <dbReference type="ChEBI" id="CHEBI:15377"/>
        <dbReference type="ChEBI" id="CHEBI:15378"/>
        <dbReference type="ChEBI" id="CHEBI:30823"/>
        <dbReference type="ChEBI" id="CHEBI:72841"/>
        <dbReference type="ChEBI" id="CHEBI:75158"/>
    </reaction>
    <physiologicalReaction direction="left-to-right" evidence="11">
        <dbReference type="Rhea" id="RHEA:40920"/>
    </physiologicalReaction>
</comment>
<comment type="catalytic activity">
    <reaction evidence="1">
        <text>1,2-dihexadecanoyl-sn-glycero-3-phosphocholine + 2 H2O = sn-glycerol 3-phosphocholine + 2 hexadecanoate + 2 H(+)</text>
        <dbReference type="Rhea" id="RHEA:40975"/>
        <dbReference type="ChEBI" id="CHEBI:7896"/>
        <dbReference type="ChEBI" id="CHEBI:15377"/>
        <dbReference type="ChEBI" id="CHEBI:15378"/>
        <dbReference type="ChEBI" id="CHEBI:16870"/>
        <dbReference type="ChEBI" id="CHEBI:72999"/>
    </reaction>
    <physiologicalReaction direction="left-to-right" evidence="1">
        <dbReference type="Rhea" id="RHEA:40976"/>
    </physiologicalReaction>
</comment>
<comment type="catalytic activity">
    <reaction evidence="7">
        <text>1-O-hexadecyl-2-(9Z)-octadecenoyl-sn-glycero-3-phosphocholine + H2O = 1-O-hexadecyl-sn-glycero-3-phosphocholine + (9Z)-octadecenoate + H(+)</text>
        <dbReference type="Rhea" id="RHEA:40915"/>
        <dbReference type="ChEBI" id="CHEBI:15377"/>
        <dbReference type="ChEBI" id="CHEBI:15378"/>
        <dbReference type="ChEBI" id="CHEBI:30823"/>
        <dbReference type="ChEBI" id="CHEBI:34112"/>
        <dbReference type="ChEBI" id="CHEBI:64496"/>
    </reaction>
    <physiologicalReaction direction="left-to-right" evidence="11">
        <dbReference type="Rhea" id="RHEA:40916"/>
    </physiologicalReaction>
</comment>
<comment type="catalytic activity">
    <reaction evidence="5 7 8">
        <text>1-hexadecanoyl-sn-glycero-3-phosphocholine + H2O = sn-glycerol 3-phosphocholine + hexadecanoate + H(+)</text>
        <dbReference type="Rhea" id="RHEA:40435"/>
        <dbReference type="ChEBI" id="CHEBI:7896"/>
        <dbReference type="ChEBI" id="CHEBI:15377"/>
        <dbReference type="ChEBI" id="CHEBI:15378"/>
        <dbReference type="ChEBI" id="CHEBI:16870"/>
        <dbReference type="ChEBI" id="CHEBI:72998"/>
    </reaction>
    <physiologicalReaction direction="left-to-right" evidence="10 11 12">
        <dbReference type="Rhea" id="RHEA:40436"/>
    </physiologicalReaction>
</comment>
<comment type="catalytic activity">
    <reaction evidence="5 7 8">
        <text>1,2,3-tri-(9Z-octadecenoyl)-glycerol + H2O = di-(9Z)-octadecenoylglycerol + (9Z)-octadecenoate + H(+)</text>
        <dbReference type="Rhea" id="RHEA:38575"/>
        <dbReference type="ChEBI" id="CHEBI:15377"/>
        <dbReference type="ChEBI" id="CHEBI:15378"/>
        <dbReference type="ChEBI" id="CHEBI:30823"/>
        <dbReference type="ChEBI" id="CHEBI:53753"/>
        <dbReference type="ChEBI" id="CHEBI:75945"/>
    </reaction>
    <physiologicalReaction direction="left-to-right" evidence="10 11 12">
        <dbReference type="Rhea" id="RHEA:38576"/>
    </physiologicalReaction>
</comment>
<comment type="catalytic activity">
    <reaction evidence="7">
        <text>1-hexadecanoyl-2-(9Z)-octadecenoyl-3-octadecanoyl-sn-glycerol + H2O = 1-hexadecanoyl-2-(9Z-octadecenoyl)-sn-glycerol + octadecanoate + H(+)</text>
        <dbReference type="Rhea" id="RHEA:41111"/>
        <dbReference type="ChEBI" id="CHEBI:15377"/>
        <dbReference type="ChEBI" id="CHEBI:15378"/>
        <dbReference type="ChEBI" id="CHEBI:25629"/>
        <dbReference type="ChEBI" id="CHEBI:75466"/>
        <dbReference type="ChEBI" id="CHEBI:77623"/>
    </reaction>
    <physiologicalReaction direction="left-to-right" evidence="11">
        <dbReference type="Rhea" id="RHEA:41112"/>
    </physiologicalReaction>
</comment>
<comment type="catalytic activity">
    <reaction evidence="7">
        <text>1,3-dihexadecanoyl-2-(9Z-octadecenoyl)glycerol + H2O = 1,3-dihexadecanoylglycerol + (9Z)-octadecenoate + H(+)</text>
        <dbReference type="Rhea" id="RHEA:40983"/>
        <dbReference type="ChEBI" id="CHEBI:15377"/>
        <dbReference type="ChEBI" id="CHEBI:15378"/>
        <dbReference type="ChEBI" id="CHEBI:30823"/>
        <dbReference type="ChEBI" id="CHEBI:75688"/>
        <dbReference type="ChEBI" id="CHEBI:77619"/>
    </reaction>
    <physiologicalReaction direction="left-to-right" evidence="11">
        <dbReference type="Rhea" id="RHEA:40984"/>
    </physiologicalReaction>
</comment>
<comment type="catalytic activity">
    <reaction evidence="7">
        <text>1,3-dihexadecanoyl-2-(9Z-octadecenoyl)glycerol + H2O = 1-hexadecanoyl-2-(9Z-octadecenoyl)-glycerol + hexadecanoate + H(+)</text>
        <dbReference type="Rhea" id="RHEA:40979"/>
        <dbReference type="ChEBI" id="CHEBI:7896"/>
        <dbReference type="ChEBI" id="CHEBI:15377"/>
        <dbReference type="ChEBI" id="CHEBI:15378"/>
        <dbReference type="ChEBI" id="CHEBI:75585"/>
        <dbReference type="ChEBI" id="CHEBI:75688"/>
    </reaction>
    <physiologicalReaction direction="left-to-right" evidence="11">
        <dbReference type="Rhea" id="RHEA:40980"/>
    </physiologicalReaction>
</comment>
<comment type="catalytic activity">
    <reaction evidence="7">
        <text>1-hexadecanoyl-2-(9Z)-octadecenoyl-3-octadecanoyl-sn-glycerol + H2O = 1-hexadecanoyl-3-octadecanoyl-sn-glycerol + (9Z)-octadecenoate + H(+)</text>
        <dbReference type="Rhea" id="RHEA:41103"/>
        <dbReference type="ChEBI" id="CHEBI:15377"/>
        <dbReference type="ChEBI" id="CHEBI:15378"/>
        <dbReference type="ChEBI" id="CHEBI:30823"/>
        <dbReference type="ChEBI" id="CHEBI:77623"/>
        <dbReference type="ChEBI" id="CHEBI:77624"/>
    </reaction>
    <physiologicalReaction direction="left-to-right" evidence="11">
        <dbReference type="Rhea" id="RHEA:41104"/>
    </physiologicalReaction>
</comment>
<comment type="catalytic activity">
    <reaction evidence="7">
        <text>1-hexadecanoyl-2-(9Z)-octadecenoyl-3-octadecanoyl-sn-glycerol + H2O = 2-(9Z-octadecenoyl)-3-octadecanoyl-sn-glycerol + hexadecanoate + H(+)</text>
        <dbReference type="Rhea" id="RHEA:41107"/>
        <dbReference type="ChEBI" id="CHEBI:7896"/>
        <dbReference type="ChEBI" id="CHEBI:15377"/>
        <dbReference type="ChEBI" id="CHEBI:15378"/>
        <dbReference type="ChEBI" id="CHEBI:75558"/>
        <dbReference type="ChEBI" id="CHEBI:77623"/>
    </reaction>
    <physiologicalReaction direction="left-to-right" evidence="11">
        <dbReference type="Rhea" id="RHEA:41108"/>
    </physiologicalReaction>
</comment>
<comment type="catalytic activity">
    <reaction evidence="7">
        <text>1-octadecanoyl-2-(9Z,12Z)-octadecadienoyl-sn-glycerol + H2O = 1-octadecanoyl-sn-glycerol + (9Z,12Z)-octadecadienoate + H(+)</text>
        <dbReference type="Rhea" id="RHEA:40927"/>
        <dbReference type="ChEBI" id="CHEBI:15377"/>
        <dbReference type="ChEBI" id="CHEBI:15378"/>
        <dbReference type="ChEBI" id="CHEBI:30245"/>
        <dbReference type="ChEBI" id="CHEBI:75550"/>
        <dbReference type="ChEBI" id="CHEBI:77097"/>
    </reaction>
    <physiologicalReaction direction="left-to-right" evidence="11">
        <dbReference type="Rhea" id="RHEA:40928"/>
    </physiologicalReaction>
</comment>
<comment type="catalytic activity">
    <reaction evidence="7">
        <text>1,2-di-(9Z-octadecenoyl)-sn-glycerol + H2O = 1-(9Z-octadecenoyl)-sn-glycerol + (9Z)-octadecenoate + H(+)</text>
        <dbReference type="Rhea" id="RHEA:41219"/>
        <dbReference type="ChEBI" id="CHEBI:15377"/>
        <dbReference type="ChEBI" id="CHEBI:15378"/>
        <dbReference type="ChEBI" id="CHEBI:30823"/>
        <dbReference type="ChEBI" id="CHEBI:52333"/>
        <dbReference type="ChEBI" id="CHEBI:75757"/>
    </reaction>
    <physiologicalReaction direction="left-to-right" evidence="11">
        <dbReference type="Rhea" id="RHEA:41220"/>
    </physiologicalReaction>
</comment>
<comment type="catalytic activity">
    <reaction evidence="7">
        <text>2,3-di-(9Z)-octadecenoyl-sn-glycerol + H2O = 3-(9Z-octadecenoyl)-sn-glycerol + (9Z)-octadecenoate + H(+)</text>
        <dbReference type="Rhea" id="RHEA:42604"/>
        <dbReference type="ChEBI" id="CHEBI:15377"/>
        <dbReference type="ChEBI" id="CHEBI:15378"/>
        <dbReference type="ChEBI" id="CHEBI:30823"/>
        <dbReference type="ChEBI" id="CHEBI:75824"/>
        <dbReference type="ChEBI" id="CHEBI:75938"/>
    </reaction>
    <physiologicalReaction direction="left-to-right" evidence="11">
        <dbReference type="Rhea" id="RHEA:42605"/>
    </physiologicalReaction>
</comment>
<comment type="catalytic activity">
    <reaction evidence="1">
        <text>1,3-di-(9Z-octadecenoyl)-glycerol + H2O = 1-(9Z-octadecenoyl)-glycerol + (9Z)-octadecenoate + H(+)</text>
        <dbReference type="Rhea" id="RHEA:39939"/>
        <dbReference type="ChEBI" id="CHEBI:15377"/>
        <dbReference type="ChEBI" id="CHEBI:15378"/>
        <dbReference type="ChEBI" id="CHEBI:30823"/>
        <dbReference type="ChEBI" id="CHEBI:75342"/>
        <dbReference type="ChEBI" id="CHEBI:75735"/>
    </reaction>
    <physiologicalReaction direction="left-to-right" evidence="1">
        <dbReference type="Rhea" id="RHEA:39940"/>
    </physiologicalReaction>
</comment>
<comment type="catalytic activity">
    <reaction evidence="1">
        <text>1-(9Z-octadecenoyl)-glycerol + H2O = glycerol + (9Z)-octadecenoate + H(+)</text>
        <dbReference type="Rhea" id="RHEA:38487"/>
        <dbReference type="ChEBI" id="CHEBI:15377"/>
        <dbReference type="ChEBI" id="CHEBI:15378"/>
        <dbReference type="ChEBI" id="CHEBI:17754"/>
        <dbReference type="ChEBI" id="CHEBI:30823"/>
        <dbReference type="ChEBI" id="CHEBI:75342"/>
    </reaction>
    <physiologicalReaction direction="left-to-right" evidence="1">
        <dbReference type="Rhea" id="RHEA:38488"/>
    </physiologicalReaction>
</comment>
<comment type="catalytic activity">
    <reaction evidence="1">
        <text>2-(9Z-octadecenoyl)-glycerol + H2O = glycerol + (9Z)-octadecenoate + H(+)</text>
        <dbReference type="Rhea" id="RHEA:38491"/>
        <dbReference type="ChEBI" id="CHEBI:15377"/>
        <dbReference type="ChEBI" id="CHEBI:15378"/>
        <dbReference type="ChEBI" id="CHEBI:17754"/>
        <dbReference type="ChEBI" id="CHEBI:30823"/>
        <dbReference type="ChEBI" id="CHEBI:73990"/>
    </reaction>
    <physiologicalReaction direction="left-to-right" evidence="1">
        <dbReference type="Rhea" id="RHEA:38492"/>
    </physiologicalReaction>
</comment>
<comment type="activity regulation">
    <text evidence="7 8">Up-regulated by bile acids such as deoxycholate (PubMed:9442064, PubMed:9442065). Inhibited by diisopropyl fluorophosphate (PubMed:9442064, PubMed:9442065).</text>
</comment>
<comment type="biophysicochemical properties">
    <phDependence>
        <text evidence="7">Optimum pH is 8-9.</text>
    </phDependence>
</comment>
<comment type="subcellular location">
    <subcellularLocation>
        <location evidence="7 8">Apical cell membrane</location>
        <topology evidence="2">Single-pass type I membrane protein</topology>
    </subcellularLocation>
    <text>Present in the intestinal brush border membranes.</text>
</comment>
<comment type="tissue specificity">
    <text evidence="6 8">Expressed in the ileum mucosa, Paneth cells spermatocytes, spermatids and sperm (at protein level). Expressed in the ileum, jejunum, esophagus and testis.</text>
</comment>
<comment type="domain">
    <text evidence="8">Repeat 2 contains the catalytic domain.</text>
</comment>
<comment type="PTM">
    <text evidence="8">Undergoes proteolytic cleavage in the ileum.</text>
</comment>
<comment type="similarity">
    <text evidence="9">Belongs to the 'GDSL' lipolytic enzyme family. Phospholipase B1 subfamily.</text>
</comment>
<keyword id="KW-1003">Cell membrane</keyword>
<keyword id="KW-0175">Coiled coil</keyword>
<keyword id="KW-0903">Direct protein sequencing</keyword>
<keyword id="KW-0325">Glycoprotein</keyword>
<keyword id="KW-0378">Hydrolase</keyword>
<keyword id="KW-0443">Lipid metabolism</keyword>
<keyword id="KW-0472">Membrane</keyword>
<keyword id="KW-1208">Phospholipid metabolism</keyword>
<keyword id="KW-1185">Reference proteome</keyword>
<keyword id="KW-0677">Repeat</keyword>
<keyword id="KW-0732">Signal</keyword>
<keyword id="KW-0812">Transmembrane</keyword>
<keyword id="KW-1133">Transmembrane helix</keyword>
<proteinExistence type="evidence at protein level"/>
<dbReference type="EC" id="3.1.1.5" evidence="5 7 8"/>
<dbReference type="EC" id="3.1.1.4" evidence="5 7 8"/>
<dbReference type="EC" id="3.1.1.3" evidence="5 7 8"/>
<dbReference type="EMBL" id="D63648">
    <property type="protein sequence ID" value="BAA23813.1"/>
    <property type="molecule type" value="mRNA"/>
</dbReference>
<dbReference type="RefSeq" id="NP_620253.1">
    <property type="nucleotide sequence ID" value="NM_138898.2"/>
</dbReference>
<dbReference type="RefSeq" id="XP_063117606.1">
    <property type="nucleotide sequence ID" value="XM_063261536.1"/>
</dbReference>
<dbReference type="FunCoup" id="O54728">
    <property type="interactions" value="43"/>
</dbReference>
<dbReference type="STRING" id="10116.ENSRNOP00000057888"/>
<dbReference type="SwissLipids" id="SLP:000000624"/>
<dbReference type="CarbonylDB" id="O54728"/>
<dbReference type="GlyCosmos" id="O54728">
    <property type="glycosylation" value="14 sites, No reported glycans"/>
</dbReference>
<dbReference type="GlyGen" id="O54728">
    <property type="glycosylation" value="14 sites"/>
</dbReference>
<dbReference type="iPTMnet" id="O54728"/>
<dbReference type="PhosphoSitePlus" id="O54728"/>
<dbReference type="PaxDb" id="10116-ENSRNOP00000057888"/>
<dbReference type="Ensembl" id="ENSRNOT00000061176.4">
    <property type="protein sequence ID" value="ENSRNOP00000057888.4"/>
    <property type="gene ID" value="ENSRNOG00000026037.7"/>
</dbReference>
<dbReference type="GeneID" id="192259"/>
<dbReference type="KEGG" id="rno:192259"/>
<dbReference type="AGR" id="RGD:621565"/>
<dbReference type="CTD" id="151056"/>
<dbReference type="RGD" id="621565">
    <property type="gene designation" value="Plb1"/>
</dbReference>
<dbReference type="eggNOG" id="KOG3670">
    <property type="taxonomic scope" value="Eukaryota"/>
</dbReference>
<dbReference type="GeneTree" id="ENSGT00530000063883"/>
<dbReference type="InParanoid" id="O54728"/>
<dbReference type="OMA" id="KYMQRED"/>
<dbReference type="OrthoDB" id="10265800at2759"/>
<dbReference type="PhylomeDB" id="O54728"/>
<dbReference type="Reactome" id="R-RNO-1482788">
    <property type="pathway name" value="Acyl chain remodelling of PC"/>
</dbReference>
<dbReference type="Reactome" id="R-RNO-975634">
    <property type="pathway name" value="Retinoid metabolism and transport"/>
</dbReference>
<dbReference type="PRO" id="PR:O54728"/>
<dbReference type="Proteomes" id="UP000002494">
    <property type="component" value="Chromosome 6"/>
</dbReference>
<dbReference type="GO" id="GO:0016324">
    <property type="term" value="C:apical plasma membrane"/>
    <property type="evidence" value="ECO:0007669"/>
    <property type="project" value="UniProtKB-SubCell"/>
</dbReference>
<dbReference type="GO" id="GO:0031526">
    <property type="term" value="C:brush border membrane"/>
    <property type="evidence" value="ECO:0000314"/>
    <property type="project" value="RGD"/>
</dbReference>
<dbReference type="GO" id="GO:0047499">
    <property type="term" value="F:calcium-independent phospholipase A2 activity"/>
    <property type="evidence" value="ECO:0000314"/>
    <property type="project" value="UniProtKB"/>
</dbReference>
<dbReference type="GO" id="GO:0004622">
    <property type="term" value="F:lysophospholipase activity"/>
    <property type="evidence" value="ECO:0000314"/>
    <property type="project" value="UniProtKB"/>
</dbReference>
<dbReference type="GO" id="GO:0004623">
    <property type="term" value="F:phospholipase A2 activity"/>
    <property type="evidence" value="ECO:0000314"/>
    <property type="project" value="RGD"/>
</dbReference>
<dbReference type="GO" id="GO:0050253">
    <property type="term" value="F:retinyl-palmitate esterase activity"/>
    <property type="evidence" value="ECO:0000314"/>
    <property type="project" value="RGD"/>
</dbReference>
<dbReference type="GO" id="GO:0004806">
    <property type="term" value="F:triacylglycerol lipase activity"/>
    <property type="evidence" value="ECO:0000314"/>
    <property type="project" value="UniProtKB"/>
</dbReference>
<dbReference type="GO" id="GO:0046340">
    <property type="term" value="P:diacylglycerol catabolic process"/>
    <property type="evidence" value="ECO:0000314"/>
    <property type="project" value="UniProtKB"/>
</dbReference>
<dbReference type="GO" id="GO:0034638">
    <property type="term" value="P:phosphatidylcholine catabolic process"/>
    <property type="evidence" value="ECO:0000314"/>
    <property type="project" value="UniProtKB"/>
</dbReference>
<dbReference type="GO" id="GO:0046338">
    <property type="term" value="P:phosphatidylethanolamine catabolic process"/>
    <property type="evidence" value="ECO:0000314"/>
    <property type="project" value="UniProtKB"/>
</dbReference>
<dbReference type="GO" id="GO:0034478">
    <property type="term" value="P:phosphatidylglycerol catabolic process"/>
    <property type="evidence" value="ECO:0000314"/>
    <property type="project" value="UniProtKB"/>
</dbReference>
<dbReference type="GO" id="GO:0006644">
    <property type="term" value="P:phospholipid metabolic process"/>
    <property type="evidence" value="ECO:0000314"/>
    <property type="project" value="RGD"/>
</dbReference>
<dbReference type="GO" id="GO:2000344">
    <property type="term" value="P:positive regulation of acrosome reaction"/>
    <property type="evidence" value="ECO:0000266"/>
    <property type="project" value="RGD"/>
</dbReference>
<dbReference type="GO" id="GO:0042572">
    <property type="term" value="P:retinol metabolic process"/>
    <property type="evidence" value="ECO:0000314"/>
    <property type="project" value="RGD"/>
</dbReference>
<dbReference type="GO" id="GO:0019433">
    <property type="term" value="P:triglyceride catabolic process"/>
    <property type="evidence" value="ECO:0000314"/>
    <property type="project" value="UniProtKB"/>
</dbReference>
<dbReference type="CDD" id="cd01824">
    <property type="entry name" value="Phospholipase_B_like"/>
    <property type="match status" value="4"/>
</dbReference>
<dbReference type="FunFam" id="3.40.50.1110:FF:000005">
    <property type="entry name" value="Phospholipase B1"/>
    <property type="match status" value="1"/>
</dbReference>
<dbReference type="Gene3D" id="3.40.50.1110">
    <property type="entry name" value="SGNH hydrolase"/>
    <property type="match status" value="3"/>
</dbReference>
<dbReference type="InterPro" id="IPR001087">
    <property type="entry name" value="GDSL"/>
</dbReference>
<dbReference type="InterPro" id="IPR008265">
    <property type="entry name" value="Lipase_GDSL_AS"/>
</dbReference>
<dbReference type="InterPro" id="IPR035547">
    <property type="entry name" value="Phospholipase_B"/>
</dbReference>
<dbReference type="InterPro" id="IPR038885">
    <property type="entry name" value="PLB1"/>
</dbReference>
<dbReference type="InterPro" id="IPR036514">
    <property type="entry name" value="SGNH_hydro_sf"/>
</dbReference>
<dbReference type="PANTHER" id="PTHR21325">
    <property type="entry name" value="PHOSPHOLIPASE B, PLB1"/>
    <property type="match status" value="1"/>
</dbReference>
<dbReference type="PANTHER" id="PTHR21325:SF52">
    <property type="entry name" value="PHOSPHOLIPASE B1, MEMBRANE-ASSOCIATED"/>
    <property type="match status" value="1"/>
</dbReference>
<dbReference type="Pfam" id="PF00657">
    <property type="entry name" value="Lipase_GDSL"/>
    <property type="match status" value="3"/>
</dbReference>
<dbReference type="SUPFAM" id="SSF52266">
    <property type="entry name" value="SGNH hydrolase"/>
    <property type="match status" value="3"/>
</dbReference>
<dbReference type="PROSITE" id="PS01098">
    <property type="entry name" value="LIPASE_GDSL_SER"/>
    <property type="match status" value="2"/>
</dbReference>
<organism>
    <name type="scientific">Rattus norvegicus</name>
    <name type="common">Rat</name>
    <dbReference type="NCBI Taxonomy" id="10116"/>
    <lineage>
        <taxon>Eukaryota</taxon>
        <taxon>Metazoa</taxon>
        <taxon>Chordata</taxon>
        <taxon>Craniata</taxon>
        <taxon>Vertebrata</taxon>
        <taxon>Euteleostomi</taxon>
        <taxon>Mammalia</taxon>
        <taxon>Eutheria</taxon>
        <taxon>Euarchontoglires</taxon>
        <taxon>Glires</taxon>
        <taxon>Rodentia</taxon>
        <taxon>Myomorpha</taxon>
        <taxon>Muroidea</taxon>
        <taxon>Muridae</taxon>
        <taxon>Murinae</taxon>
        <taxon>Rattus</taxon>
    </lineage>
</organism>
<name>PLB1_RAT</name>
<sequence length="1450" mass="161089">MESWPGVSLVGLLLLLLLGQGPSQIHGSSGENTSQPQQVFRTLKNFSFPCKPKKLELSVLSKSVHSLRPSDIKLVAAIGNLETPPAPGSGVVNMEKPQSLESELQNVCIGIMTALSDIIRHFNPSVLMPTCSPGKGTAGHTTIAEDLWIQAKELVRHLKDNPELDFEKDWKLITVLFSNTSQCHLCSSDQQKRHLMKHMEMLSGVLDYLHREVPRAFVNLVDLSEVLTMAQQHQETGFSPAPEICKCSEEITKLSKAVMQWSYQEAWEDLLASSKFNKHETFAVVFQSFFSEVELPLERPSPQDSTTLALRIWNSMMEPVGRKDGTLNEAERKTMKCPSQESPYLFTYRNSNYQARQLKPIGKFQMKEGTKFTCPDKDPSDSIPTTVHRLRPADIKVIGAMGDSLTAGNGAGSSPGNVLDVLTQYRGLSWSVGGDETIETVTTLANILREFNPSLKGFSVGTGKENTPRASFNQAVAGAKSDGLAAQAKKLVSLMKDDKTINFQEDWKIITVFIGGNDLCGSCNNLARFSPQTFTDNIKTALDILHAEVPRAFVNMVSVIEITPLRELFNEPKVSCPRMILRSLCPCVLNLGENSAELAQLVERNRQYQEETGKLIESGRYDTRDDFTVVLQPMFENVVMPRTLEGLPDSSFFAPDCFHFNVKTHARSAIALWKNMLEPVGRKTRHQNFEIKVPIMCPNQTSPFLSTTKNSNLGHGTSMSCEEKAPSASPPTSVHTLRPADIQVVAALGDSVTAGNGISSQEGDLADVTTQYRGLSYSAGGDKFLENVTTLPNILREFNGNLTGYSVGTGDVNSASAFLNQAVPGAKAENLASQVQTLIQKMKNDTRVNFHQDWKVITVMIGASDLCDFCKDSNRYSAANFSDHLRNALDILHKEVPRALVNLVDFMNPSIIRQVFLKNPDKCPVNQTSVLCNCVLTPGEDSHELARLEAFTKSYQSSMLQLVESGRYDTREDFSVVLQPFLFNIRLPILENGNPDTSFFAPDCILLSQKFHTQLARALWANMLEPLGKKMDTLDPKELIALACPTKDKPFLRTFRNSNYTYPIKPAIENWGSDFLCTEQSPSSKVPTSVHELRPSDIKVVAAMGDFLTTATGARPSESSSLDTPWRGLSWSIGGDGTLETHTTLPNILKKFNPSILGFSTGTLENTAGLNVAEEGARAQDMPAQAQALVKKMKSTPTINIQEDWKLITLLIGNNDLCLYCEDPENYSTREYVKYIQHALDIFYEELPRVFINVVEVMELSGLLHDQGGKCAMPLAVQKNCSCLKRSQNLMAMQELKKVNGNLQSALSELSYWHRYMQREDFAVTVQPFFRNTFVPLDERGGLDLTFFSEDCFHFSVRGHAEMAIALWNNMLEPVGKKTTSNNFTYNRTKLKCPSPENPFLYTVRNSQILLDKAKENSNTLYWAVPVAAVGGLVVGILGMMLWRTVRLVQ</sequence>